<feature type="signal peptide" evidence="5">
    <location>
        <begin position="1"/>
        <end position="18"/>
    </location>
</feature>
<feature type="chain" id="PRO_0000425334" description="Proapolipoprotein A-I">
    <location>
        <begin position="19"/>
        <end position="267"/>
    </location>
</feature>
<feature type="chain" id="PRO_0000416566" description="Apolipoprotein A-I">
    <location>
        <begin position="25"/>
        <end position="267"/>
    </location>
</feature>
<feature type="chain" id="PRO_0000416567" description="Truncated apolipoprotein A-I" evidence="1">
    <location>
        <begin position="25"/>
        <end position="266"/>
    </location>
</feature>
<feature type="repeat" description="1">
    <location>
        <begin position="68"/>
        <end position="89"/>
    </location>
</feature>
<feature type="repeat" description="2">
    <location>
        <begin position="90"/>
        <end position="111"/>
    </location>
</feature>
<feature type="repeat" description="3; half-length">
    <location>
        <begin position="112"/>
        <end position="122"/>
    </location>
</feature>
<feature type="repeat" description="4">
    <location>
        <begin position="123"/>
        <end position="144"/>
    </location>
</feature>
<feature type="repeat" description="5">
    <location>
        <begin position="145"/>
        <end position="166"/>
    </location>
</feature>
<feature type="repeat" description="6">
    <location>
        <begin position="167"/>
        <end position="188"/>
    </location>
</feature>
<feature type="repeat" description="7">
    <location>
        <begin position="189"/>
        <end position="210"/>
    </location>
</feature>
<feature type="repeat" description="8">
    <location>
        <begin position="211"/>
        <end position="232"/>
    </location>
</feature>
<feature type="repeat" description="9; half-length">
    <location>
        <begin position="233"/>
        <end position="243"/>
    </location>
</feature>
<feature type="repeat" description="10">
    <location>
        <begin position="244"/>
        <end position="267"/>
    </location>
</feature>
<feature type="region of interest" description="10 X approximate tandem repeats">
    <location>
        <begin position="68"/>
        <end position="267"/>
    </location>
</feature>
<feature type="modified residue" description="Methionine sulfoxide" evidence="1">
    <location>
        <position position="110"/>
    </location>
</feature>
<feature type="modified residue" description="Methionine sulfoxide" evidence="1">
    <location>
        <position position="136"/>
    </location>
</feature>
<proteinExistence type="evidence at protein level"/>
<protein>
    <recommendedName>
        <fullName>Apolipoprotein A-I</fullName>
        <shortName>Apo-AI</shortName>
        <shortName>ApoA-I</shortName>
    </recommendedName>
    <alternativeName>
        <fullName>Apolipoprotein A1</fullName>
    </alternativeName>
    <component>
        <recommendedName>
            <fullName>Proapolipoprotein A-I</fullName>
            <shortName>ProapoA-I</shortName>
        </recommendedName>
    </component>
    <component>
        <recommendedName>
            <fullName>Truncated apolipoprotein A-I</fullName>
        </recommendedName>
    </component>
</protein>
<organism>
    <name type="scientific">Pongo abelii</name>
    <name type="common">Sumatran orangutan</name>
    <name type="synonym">Pongo pygmaeus abelii</name>
    <dbReference type="NCBI Taxonomy" id="9601"/>
    <lineage>
        <taxon>Eukaryota</taxon>
        <taxon>Metazoa</taxon>
        <taxon>Chordata</taxon>
        <taxon>Craniata</taxon>
        <taxon>Vertebrata</taxon>
        <taxon>Euteleostomi</taxon>
        <taxon>Mammalia</taxon>
        <taxon>Eutheria</taxon>
        <taxon>Euarchontoglires</taxon>
        <taxon>Primates</taxon>
        <taxon>Haplorrhini</taxon>
        <taxon>Catarrhini</taxon>
        <taxon>Hominidae</taxon>
        <taxon>Pongo</taxon>
    </lineage>
</organism>
<comment type="function">
    <text evidence="1">Participates in the reverse transport of cholesterol from tissues to the liver for excretion by promoting cholesterol efflux from tissues and by acting as a cofactor for the lecithin cholesterol acyltransferase (LCAT). As part of the SPAP complex, activates spermatozoa motility (By similarity).</text>
</comment>
<comment type="subunit">
    <text evidence="2 3 4">Homodimer (By similarity). Interacts with APOA1BP and CLU. Component of a sperm activating protein complex (SPAP), consisting of APOA1, an immunoglobulin heavy chain, an immunoglobulin light chain and albumin. Interacts with NDRG1. Interacts with SCGB3A2 (By similarity). Interacts with NAXE and YJEFN3 (By similarity).</text>
</comment>
<comment type="subcellular location">
    <subcellularLocation>
        <location>Secreted</location>
    </subcellularLocation>
</comment>
<comment type="tissue specificity">
    <text>Major protein of plasma HDL, also found in chylomicrons.</text>
</comment>
<comment type="PTM">
    <text evidence="1">Glycosylated.</text>
</comment>
<comment type="PTM">
    <text evidence="1">Palmitoylated.</text>
</comment>
<comment type="mass spectrometry">
    <molecule>Apolipoprotein A-I</molecule>
</comment>
<comment type="similarity">
    <text evidence="7">Belongs to the apolipoprotein A1/A4/E family.</text>
</comment>
<sequence>MKAAVLTLAVLFLTGSQARHFWQQDEPPQTPWDRVKDLATVYVDVLKDSGRDYVSQFEGSALGKQLNLKLLDNWDSMTSTFSKLREQLGPVTQEFWDNLEKETEGLRQEMSKDLEEVKAKVQPYLDDFQKKWQEEMELYRQKVEPLRAELQEGARQKLHELHEKLSPLGEEMRDRARAHVDALRTHLAPYTDELRQRLAARLEALKENGGARLAEYHAKASEHLSTLSEKAKPALEDLRQGLLPVLESFKVSFLSALEEYTKKLNTQ</sequence>
<gene>
    <name type="primary">APOA1</name>
</gene>
<name>APOA1_PONAB</name>
<reference key="1">
    <citation type="journal article" date="2009" name="Comp. Biochem. Physiol.">
        <title>Mass spectral analyses of the two major apolipoproteins of great ape high density lipoproteins.</title>
        <authorList>
            <person name="Puppione D.L."/>
            <person name="Della Donna L."/>
            <person name="Laganowsky A.D."/>
            <person name="Bassilian S."/>
            <person name="Souda P."/>
            <person name="Ryder O.A."/>
            <person name="Whitelegge J.P."/>
        </authorList>
    </citation>
    <scope>IDENTIFICATION BY MASS SPECTROMETRY</scope>
</reference>
<evidence type="ECO:0000250" key="1"/>
<evidence type="ECO:0000250" key="2">
    <source>
        <dbReference type="UniProtKB" id="G5BQH5"/>
    </source>
</evidence>
<evidence type="ECO:0000250" key="3">
    <source>
        <dbReference type="UniProtKB" id="P02647"/>
    </source>
</evidence>
<evidence type="ECO:0000250" key="4">
    <source>
        <dbReference type="UniProtKB" id="P04639"/>
    </source>
</evidence>
<evidence type="ECO:0000255" key="5"/>
<evidence type="ECO:0000269" key="6">
    <source>
    </source>
</evidence>
<evidence type="ECO:0000305" key="7"/>
<keyword id="KW-0153">Cholesterol metabolism</keyword>
<keyword id="KW-0325">Glycoprotein</keyword>
<keyword id="KW-0345">HDL</keyword>
<keyword id="KW-0443">Lipid metabolism</keyword>
<keyword id="KW-0445">Lipid transport</keyword>
<keyword id="KW-0449">Lipoprotein</keyword>
<keyword id="KW-0558">Oxidation</keyword>
<keyword id="KW-0564">Palmitate</keyword>
<keyword id="KW-1185">Reference proteome</keyword>
<keyword id="KW-0677">Repeat</keyword>
<keyword id="KW-0964">Secreted</keyword>
<keyword id="KW-0732">Signal</keyword>
<keyword id="KW-0753">Steroid metabolism</keyword>
<keyword id="KW-1207">Sterol metabolism</keyword>
<keyword id="KW-0813">Transport</keyword>
<dbReference type="RefSeq" id="XP_009245368.1">
    <property type="nucleotide sequence ID" value="XM_009247093.1"/>
</dbReference>
<dbReference type="RefSeq" id="XP_024110625.1">
    <property type="nucleotide sequence ID" value="XM_024254857.2"/>
</dbReference>
<dbReference type="BMRB" id="P0DJG1"/>
<dbReference type="SMR" id="P0DJG1"/>
<dbReference type="FunCoup" id="P0DJG1">
    <property type="interactions" value="142"/>
</dbReference>
<dbReference type="STRING" id="9601.ENSPPYP00000004472"/>
<dbReference type="Ensembl" id="ENSPPYT00000004648.3">
    <property type="protein sequence ID" value="ENSPPYP00000004472.3"/>
    <property type="gene ID" value="ENSPPYG00000003904.3"/>
</dbReference>
<dbReference type="GeneID" id="100454832"/>
<dbReference type="eggNOG" id="ENOG502S1XQ">
    <property type="taxonomic scope" value="Eukaryota"/>
</dbReference>
<dbReference type="GeneTree" id="ENSGT00950000182929"/>
<dbReference type="InParanoid" id="P0DJG1"/>
<dbReference type="OMA" id="EYVAQFE"/>
<dbReference type="Proteomes" id="UP000001595">
    <property type="component" value="Chromosome 11"/>
</dbReference>
<dbReference type="GO" id="GO:0042627">
    <property type="term" value="C:chylomicron"/>
    <property type="evidence" value="ECO:0007669"/>
    <property type="project" value="TreeGrafter"/>
</dbReference>
<dbReference type="GO" id="GO:0030139">
    <property type="term" value="C:endocytic vesicle"/>
    <property type="evidence" value="ECO:0007669"/>
    <property type="project" value="Ensembl"/>
</dbReference>
<dbReference type="GO" id="GO:1903561">
    <property type="term" value="C:extracellular vesicle"/>
    <property type="evidence" value="ECO:0007669"/>
    <property type="project" value="TreeGrafter"/>
</dbReference>
<dbReference type="GO" id="GO:0034362">
    <property type="term" value="C:low-density lipoprotein particle"/>
    <property type="evidence" value="ECO:0007669"/>
    <property type="project" value="TreeGrafter"/>
</dbReference>
<dbReference type="GO" id="GO:0034366">
    <property type="term" value="C:spherical high-density lipoprotein particle"/>
    <property type="evidence" value="ECO:0007669"/>
    <property type="project" value="Ensembl"/>
</dbReference>
<dbReference type="GO" id="GO:0034361">
    <property type="term" value="C:very-low-density lipoprotein particle"/>
    <property type="evidence" value="ECO:0007669"/>
    <property type="project" value="Ensembl"/>
</dbReference>
<dbReference type="GO" id="GO:0001540">
    <property type="term" value="F:amyloid-beta binding"/>
    <property type="evidence" value="ECO:0007669"/>
    <property type="project" value="Ensembl"/>
</dbReference>
<dbReference type="GO" id="GO:0034191">
    <property type="term" value="F:apolipoprotein A-I receptor binding"/>
    <property type="evidence" value="ECO:0007669"/>
    <property type="project" value="Ensembl"/>
</dbReference>
<dbReference type="GO" id="GO:0045499">
    <property type="term" value="F:chemorepellent activity"/>
    <property type="evidence" value="ECO:0007669"/>
    <property type="project" value="Ensembl"/>
</dbReference>
<dbReference type="GO" id="GO:0015485">
    <property type="term" value="F:cholesterol binding"/>
    <property type="evidence" value="ECO:0007669"/>
    <property type="project" value="Ensembl"/>
</dbReference>
<dbReference type="GO" id="GO:0120020">
    <property type="term" value="F:cholesterol transfer activity"/>
    <property type="evidence" value="ECO:0007669"/>
    <property type="project" value="Ensembl"/>
</dbReference>
<dbReference type="GO" id="GO:0019899">
    <property type="term" value="F:enzyme binding"/>
    <property type="evidence" value="ECO:0007669"/>
    <property type="project" value="Ensembl"/>
</dbReference>
<dbReference type="GO" id="GO:0031072">
    <property type="term" value="F:heat shock protein binding"/>
    <property type="evidence" value="ECO:0007669"/>
    <property type="project" value="Ensembl"/>
</dbReference>
<dbReference type="GO" id="GO:0008035">
    <property type="term" value="F:high-density lipoprotein particle binding"/>
    <property type="evidence" value="ECO:0007669"/>
    <property type="project" value="Ensembl"/>
</dbReference>
<dbReference type="GO" id="GO:0070653">
    <property type="term" value="F:high-density lipoprotein particle receptor binding"/>
    <property type="evidence" value="ECO:0007669"/>
    <property type="project" value="Ensembl"/>
</dbReference>
<dbReference type="GO" id="GO:0060228">
    <property type="term" value="F:phosphatidylcholine-sterol O-acyltransferase activator activity"/>
    <property type="evidence" value="ECO:0007669"/>
    <property type="project" value="Ensembl"/>
</dbReference>
<dbReference type="GO" id="GO:0005543">
    <property type="term" value="F:phospholipid binding"/>
    <property type="evidence" value="ECO:0007669"/>
    <property type="project" value="Ensembl"/>
</dbReference>
<dbReference type="GO" id="GO:0042803">
    <property type="term" value="F:protein homodimerization activity"/>
    <property type="evidence" value="ECO:0000250"/>
    <property type="project" value="UniProtKB"/>
</dbReference>
<dbReference type="GO" id="GO:0030325">
    <property type="term" value="P:adrenal gland development"/>
    <property type="evidence" value="ECO:0007669"/>
    <property type="project" value="Ensembl"/>
</dbReference>
<dbReference type="GO" id="GO:0034205">
    <property type="term" value="P:amyloid-beta formation"/>
    <property type="evidence" value="ECO:0007669"/>
    <property type="project" value="Ensembl"/>
</dbReference>
<dbReference type="GO" id="GO:0043534">
    <property type="term" value="P:blood vessel endothelial cell migration"/>
    <property type="evidence" value="ECO:0007669"/>
    <property type="project" value="Ensembl"/>
</dbReference>
<dbReference type="GO" id="GO:0071402">
    <property type="term" value="P:cellular response to lipoprotein particle stimulus"/>
    <property type="evidence" value="ECO:0007669"/>
    <property type="project" value="Ensembl"/>
</dbReference>
<dbReference type="GO" id="GO:0006695">
    <property type="term" value="P:cholesterol biosynthetic process"/>
    <property type="evidence" value="ECO:0007669"/>
    <property type="project" value="Ensembl"/>
</dbReference>
<dbReference type="GO" id="GO:0033344">
    <property type="term" value="P:cholesterol efflux"/>
    <property type="evidence" value="ECO:0007669"/>
    <property type="project" value="Ensembl"/>
</dbReference>
<dbReference type="GO" id="GO:0042632">
    <property type="term" value="P:cholesterol homeostasis"/>
    <property type="evidence" value="ECO:0007669"/>
    <property type="project" value="Ensembl"/>
</dbReference>
<dbReference type="GO" id="GO:0070508">
    <property type="term" value="P:cholesterol import"/>
    <property type="evidence" value="ECO:0007669"/>
    <property type="project" value="Ensembl"/>
</dbReference>
<dbReference type="GO" id="GO:0001935">
    <property type="term" value="P:endothelial cell proliferation"/>
    <property type="evidence" value="ECO:0007669"/>
    <property type="project" value="Ensembl"/>
</dbReference>
<dbReference type="GO" id="GO:0007186">
    <property type="term" value="P:G protein-coupled receptor signaling pathway"/>
    <property type="evidence" value="ECO:0007669"/>
    <property type="project" value="Ensembl"/>
</dbReference>
<dbReference type="GO" id="GO:0008211">
    <property type="term" value="P:glucocorticoid metabolic process"/>
    <property type="evidence" value="ECO:0007669"/>
    <property type="project" value="Ensembl"/>
</dbReference>
<dbReference type="GO" id="GO:0034380">
    <property type="term" value="P:high-density lipoprotein particle assembly"/>
    <property type="evidence" value="ECO:0007669"/>
    <property type="project" value="Ensembl"/>
</dbReference>
<dbReference type="GO" id="GO:0034375">
    <property type="term" value="P:high-density lipoprotein particle remodeling"/>
    <property type="evidence" value="ECO:0007669"/>
    <property type="project" value="Ensembl"/>
</dbReference>
<dbReference type="GO" id="GO:0007229">
    <property type="term" value="P:integrin-mediated signaling pathway"/>
    <property type="evidence" value="ECO:0007669"/>
    <property type="project" value="Ensembl"/>
</dbReference>
<dbReference type="GO" id="GO:0019915">
    <property type="term" value="P:lipid storage"/>
    <property type="evidence" value="ECO:0007669"/>
    <property type="project" value="Ensembl"/>
</dbReference>
<dbReference type="GO" id="GO:0042158">
    <property type="term" value="P:lipoprotein biosynthetic process"/>
    <property type="evidence" value="ECO:0007669"/>
    <property type="project" value="Ensembl"/>
</dbReference>
<dbReference type="GO" id="GO:0060354">
    <property type="term" value="P:negative regulation of cell adhesion molecule production"/>
    <property type="evidence" value="ECO:0007669"/>
    <property type="project" value="Ensembl"/>
</dbReference>
<dbReference type="GO" id="GO:0002719">
    <property type="term" value="P:negative regulation of cytokine production involved in immune response"/>
    <property type="evidence" value="ECO:0007669"/>
    <property type="project" value="Ensembl"/>
</dbReference>
<dbReference type="GO" id="GO:0034115">
    <property type="term" value="P:negative regulation of heterotypic cell-cell adhesion"/>
    <property type="evidence" value="ECO:0007669"/>
    <property type="project" value="Ensembl"/>
</dbReference>
<dbReference type="GO" id="GO:0050728">
    <property type="term" value="P:negative regulation of inflammatory response"/>
    <property type="evidence" value="ECO:0007669"/>
    <property type="project" value="Ensembl"/>
</dbReference>
<dbReference type="GO" id="GO:0032691">
    <property type="term" value="P:negative regulation of interleukin-1 beta production"/>
    <property type="evidence" value="ECO:0007669"/>
    <property type="project" value="Ensembl"/>
</dbReference>
<dbReference type="GO" id="GO:0010804">
    <property type="term" value="P:negative regulation of tumor necrosis factor-mediated signaling pathway"/>
    <property type="evidence" value="ECO:0007669"/>
    <property type="project" value="Ensembl"/>
</dbReference>
<dbReference type="GO" id="GO:0010903">
    <property type="term" value="P:negative regulation of very-low-density lipoprotein particle remodeling"/>
    <property type="evidence" value="ECO:0007669"/>
    <property type="project" value="Ensembl"/>
</dbReference>
<dbReference type="GO" id="GO:0006656">
    <property type="term" value="P:phosphatidylcholine biosynthetic process"/>
    <property type="evidence" value="ECO:0007669"/>
    <property type="project" value="Ensembl"/>
</dbReference>
<dbReference type="GO" id="GO:0033700">
    <property type="term" value="P:phospholipid efflux"/>
    <property type="evidence" value="ECO:0007669"/>
    <property type="project" value="Ensembl"/>
</dbReference>
<dbReference type="GO" id="GO:0055091">
    <property type="term" value="P:phospholipid homeostasis"/>
    <property type="evidence" value="ECO:0007669"/>
    <property type="project" value="Ensembl"/>
</dbReference>
<dbReference type="GO" id="GO:0010875">
    <property type="term" value="P:positive regulation of cholesterol efflux"/>
    <property type="evidence" value="ECO:0000250"/>
    <property type="project" value="UniProtKB"/>
</dbReference>
<dbReference type="GO" id="GO:0090205">
    <property type="term" value="P:positive regulation of cholesterol metabolic process"/>
    <property type="evidence" value="ECO:0007669"/>
    <property type="project" value="Ensembl"/>
</dbReference>
<dbReference type="GO" id="GO:0050766">
    <property type="term" value="P:positive regulation of phagocytosis"/>
    <property type="evidence" value="ECO:0000250"/>
    <property type="project" value="UniProtKB"/>
</dbReference>
<dbReference type="GO" id="GO:1902995">
    <property type="term" value="P:positive regulation of phospholipid efflux"/>
    <property type="evidence" value="ECO:0000250"/>
    <property type="project" value="UniProtKB"/>
</dbReference>
<dbReference type="GO" id="GO:0035025">
    <property type="term" value="P:positive regulation of Rho protein signal transduction"/>
    <property type="evidence" value="ECO:0007669"/>
    <property type="project" value="Ensembl"/>
</dbReference>
<dbReference type="GO" id="GO:0051496">
    <property type="term" value="P:positive regulation of stress fiber assembly"/>
    <property type="evidence" value="ECO:0007669"/>
    <property type="project" value="Ensembl"/>
</dbReference>
<dbReference type="GO" id="GO:1900026">
    <property type="term" value="P:positive regulation of substrate adhesion-dependent cell spreading"/>
    <property type="evidence" value="ECO:0007669"/>
    <property type="project" value="Ensembl"/>
</dbReference>
<dbReference type="GO" id="GO:0050821">
    <property type="term" value="P:protein stabilization"/>
    <property type="evidence" value="ECO:0000250"/>
    <property type="project" value="UniProtKB"/>
</dbReference>
<dbReference type="GO" id="GO:0032489">
    <property type="term" value="P:regulation of Cdc42 protein signal transduction"/>
    <property type="evidence" value="ECO:0007669"/>
    <property type="project" value="Ensembl"/>
</dbReference>
<dbReference type="GO" id="GO:0030300">
    <property type="term" value="P:regulation of intestinal cholesterol absorption"/>
    <property type="evidence" value="ECO:0007669"/>
    <property type="project" value="Ensembl"/>
</dbReference>
<dbReference type="GO" id="GO:0043691">
    <property type="term" value="P:reverse cholesterol transport"/>
    <property type="evidence" value="ECO:0007669"/>
    <property type="project" value="Ensembl"/>
</dbReference>
<dbReference type="GO" id="GO:0070328">
    <property type="term" value="P:triglyceride homeostasis"/>
    <property type="evidence" value="ECO:0007669"/>
    <property type="project" value="Ensembl"/>
</dbReference>
<dbReference type="GO" id="GO:0051180">
    <property type="term" value="P:vitamin transport"/>
    <property type="evidence" value="ECO:0007669"/>
    <property type="project" value="Ensembl"/>
</dbReference>
<dbReference type="FunFam" id="1.20.120.20:FF:000001">
    <property type="entry name" value="Apolipoprotein A-I"/>
    <property type="match status" value="1"/>
</dbReference>
<dbReference type="FunFam" id="1.20.5.20:FF:000001">
    <property type="entry name" value="apolipoprotein A-I"/>
    <property type="match status" value="1"/>
</dbReference>
<dbReference type="Gene3D" id="1.20.5.20">
    <property type="match status" value="1"/>
</dbReference>
<dbReference type="Gene3D" id="6.10.140.380">
    <property type="match status" value="1"/>
</dbReference>
<dbReference type="Gene3D" id="1.20.120.20">
    <property type="entry name" value="Apolipoprotein"/>
    <property type="match status" value="1"/>
</dbReference>
<dbReference type="InterPro" id="IPR000074">
    <property type="entry name" value="ApoA_E"/>
</dbReference>
<dbReference type="InterPro" id="IPR050163">
    <property type="entry name" value="Apolipoprotein_A1/A4/E"/>
</dbReference>
<dbReference type="PANTHER" id="PTHR18976">
    <property type="entry name" value="APOLIPOPROTEIN"/>
    <property type="match status" value="1"/>
</dbReference>
<dbReference type="PANTHER" id="PTHR18976:SF11">
    <property type="entry name" value="APOLIPOPROTEIN A-I"/>
    <property type="match status" value="1"/>
</dbReference>
<dbReference type="Pfam" id="PF01442">
    <property type="entry name" value="Apolipoprotein"/>
    <property type="match status" value="1"/>
</dbReference>
<dbReference type="SUPFAM" id="SSF58113">
    <property type="entry name" value="Apolipoprotein A-I"/>
    <property type="match status" value="1"/>
</dbReference>
<accession>P0DJG1</accession>